<protein>
    <recommendedName>
        <fullName evidence="1">Phosphate acyltransferase</fullName>
        <ecNumber evidence="1">2.3.1.274</ecNumber>
    </recommendedName>
    <alternativeName>
        <fullName evidence="1">Acyl-ACP phosphotransacylase</fullName>
    </alternativeName>
    <alternativeName>
        <fullName evidence="1">Acyl-[acyl-carrier-protein]--phosphate acyltransferase</fullName>
    </alternativeName>
    <alternativeName>
        <fullName evidence="1">Phosphate-acyl-ACP acyltransferase</fullName>
    </alternativeName>
</protein>
<proteinExistence type="inferred from homology"/>
<organism>
    <name type="scientific">Haemophilus ducreyi (strain 35000HP / ATCC 700724)</name>
    <dbReference type="NCBI Taxonomy" id="233412"/>
    <lineage>
        <taxon>Bacteria</taxon>
        <taxon>Pseudomonadati</taxon>
        <taxon>Pseudomonadota</taxon>
        <taxon>Gammaproteobacteria</taxon>
        <taxon>Pasteurellales</taxon>
        <taxon>Pasteurellaceae</taxon>
        <taxon>Haemophilus</taxon>
    </lineage>
</organism>
<sequence length="343" mass="37580">MNRLTLALDVMGGDFGPRVTIPALSLALAQQPMLSFVLFGDQYHAIPLLHSLPAEQQQRIRFVHTSRIVDPHVPVRQALRQSKGSSMRLAIEAVVAGEAQACVSGGNTGVLMGLAKWFVEPLVGIDRPALASLIPALNGQASVMLDLGANVEADSKLLLQFAEMGNIFAQSILSLAQPRLALLNIGTEEVKGRYAIQQAHHVLKNRADLHYIGFIESDKLMNHLADVIVCDGFCGNIALKAVEGVASHFLALFKQPKRSFFVDWLSSWWGRLLYHRVYRALQRVNPERHNGATLLGLSSVVVKSHGSAGVNAYFYAINHAIEQIQNRIPVKISAGLQKLHQNL</sequence>
<evidence type="ECO:0000255" key="1">
    <source>
        <dbReference type="HAMAP-Rule" id="MF_00019"/>
    </source>
</evidence>
<name>PLSX_HAEDU</name>
<feature type="chain" id="PRO_0000189885" description="Phosphate acyltransferase">
    <location>
        <begin position="1"/>
        <end position="343"/>
    </location>
</feature>
<reference key="1">
    <citation type="submission" date="2003-06" db="EMBL/GenBank/DDBJ databases">
        <title>The complete genome sequence of Haemophilus ducreyi.</title>
        <authorList>
            <person name="Munson R.S. Jr."/>
            <person name="Ray W.C."/>
            <person name="Mahairas G."/>
            <person name="Sabo P."/>
            <person name="Mungur R."/>
            <person name="Johnson L."/>
            <person name="Nguyen D."/>
            <person name="Wang J."/>
            <person name="Forst C."/>
            <person name="Hood L."/>
        </authorList>
    </citation>
    <scope>NUCLEOTIDE SEQUENCE [LARGE SCALE GENOMIC DNA]</scope>
    <source>
        <strain>35000HP / ATCC 700724</strain>
    </source>
</reference>
<comment type="function">
    <text evidence="1">Catalyzes the reversible formation of acyl-phosphate (acyl-PO(4)) from acyl-[acyl-carrier-protein] (acyl-ACP). This enzyme utilizes acyl-ACP as fatty acyl donor, but not acyl-CoA.</text>
</comment>
<comment type="catalytic activity">
    <reaction evidence="1">
        <text>a fatty acyl-[ACP] + phosphate = an acyl phosphate + holo-[ACP]</text>
        <dbReference type="Rhea" id="RHEA:42292"/>
        <dbReference type="Rhea" id="RHEA-COMP:9685"/>
        <dbReference type="Rhea" id="RHEA-COMP:14125"/>
        <dbReference type="ChEBI" id="CHEBI:43474"/>
        <dbReference type="ChEBI" id="CHEBI:59918"/>
        <dbReference type="ChEBI" id="CHEBI:64479"/>
        <dbReference type="ChEBI" id="CHEBI:138651"/>
        <dbReference type="EC" id="2.3.1.274"/>
    </reaction>
</comment>
<comment type="pathway">
    <text evidence="1">Lipid metabolism; phospholipid metabolism.</text>
</comment>
<comment type="subunit">
    <text evidence="1">Homodimer. Probably interacts with PlsY.</text>
</comment>
<comment type="subcellular location">
    <subcellularLocation>
        <location evidence="1">Cytoplasm</location>
    </subcellularLocation>
    <text evidence="1">Associated with the membrane possibly through PlsY.</text>
</comment>
<comment type="similarity">
    <text evidence="1">Belongs to the PlsX family.</text>
</comment>
<accession>Q7VN19</accession>
<dbReference type="EC" id="2.3.1.274" evidence="1"/>
<dbReference type="EMBL" id="AE017143">
    <property type="protein sequence ID" value="AAP95678.1"/>
    <property type="molecule type" value="Genomic_DNA"/>
</dbReference>
<dbReference type="RefSeq" id="WP_010944728.1">
    <property type="nucleotide sequence ID" value="NC_002940.2"/>
</dbReference>
<dbReference type="SMR" id="Q7VN19"/>
<dbReference type="STRING" id="233412.HD_0773"/>
<dbReference type="KEGG" id="hdu:HD_0773"/>
<dbReference type="eggNOG" id="COG0416">
    <property type="taxonomic scope" value="Bacteria"/>
</dbReference>
<dbReference type="HOGENOM" id="CLU_039379_1_0_6"/>
<dbReference type="OrthoDB" id="9806408at2"/>
<dbReference type="UniPathway" id="UPA00085"/>
<dbReference type="Proteomes" id="UP000001022">
    <property type="component" value="Chromosome"/>
</dbReference>
<dbReference type="GO" id="GO:0005737">
    <property type="term" value="C:cytoplasm"/>
    <property type="evidence" value="ECO:0007669"/>
    <property type="project" value="UniProtKB-SubCell"/>
</dbReference>
<dbReference type="GO" id="GO:0043811">
    <property type="term" value="F:phosphate:acyl-[acyl carrier protein] acyltransferase activity"/>
    <property type="evidence" value="ECO:0007669"/>
    <property type="project" value="UniProtKB-UniRule"/>
</dbReference>
<dbReference type="GO" id="GO:0006633">
    <property type="term" value="P:fatty acid biosynthetic process"/>
    <property type="evidence" value="ECO:0007669"/>
    <property type="project" value="UniProtKB-UniRule"/>
</dbReference>
<dbReference type="GO" id="GO:0008654">
    <property type="term" value="P:phospholipid biosynthetic process"/>
    <property type="evidence" value="ECO:0007669"/>
    <property type="project" value="UniProtKB-KW"/>
</dbReference>
<dbReference type="Gene3D" id="3.40.718.10">
    <property type="entry name" value="Isopropylmalate Dehydrogenase"/>
    <property type="match status" value="1"/>
</dbReference>
<dbReference type="HAMAP" id="MF_00019">
    <property type="entry name" value="PlsX"/>
    <property type="match status" value="1"/>
</dbReference>
<dbReference type="InterPro" id="IPR003664">
    <property type="entry name" value="FA_synthesis"/>
</dbReference>
<dbReference type="InterPro" id="IPR012281">
    <property type="entry name" value="Phospholipid_synth_PlsX-like"/>
</dbReference>
<dbReference type="NCBIfam" id="TIGR00182">
    <property type="entry name" value="plsX"/>
    <property type="match status" value="1"/>
</dbReference>
<dbReference type="PANTHER" id="PTHR30100">
    <property type="entry name" value="FATTY ACID/PHOSPHOLIPID SYNTHESIS PROTEIN PLSX"/>
    <property type="match status" value="1"/>
</dbReference>
<dbReference type="PANTHER" id="PTHR30100:SF1">
    <property type="entry name" value="PHOSPHATE ACYLTRANSFERASE"/>
    <property type="match status" value="1"/>
</dbReference>
<dbReference type="Pfam" id="PF02504">
    <property type="entry name" value="FA_synthesis"/>
    <property type="match status" value="1"/>
</dbReference>
<dbReference type="PIRSF" id="PIRSF002465">
    <property type="entry name" value="Phsphlp_syn_PlsX"/>
    <property type="match status" value="1"/>
</dbReference>
<dbReference type="SUPFAM" id="SSF53659">
    <property type="entry name" value="Isocitrate/Isopropylmalate dehydrogenase-like"/>
    <property type="match status" value="1"/>
</dbReference>
<keyword id="KW-0963">Cytoplasm</keyword>
<keyword id="KW-0444">Lipid biosynthesis</keyword>
<keyword id="KW-0443">Lipid metabolism</keyword>
<keyword id="KW-0594">Phospholipid biosynthesis</keyword>
<keyword id="KW-1208">Phospholipid metabolism</keyword>
<keyword id="KW-1185">Reference proteome</keyword>
<keyword id="KW-0808">Transferase</keyword>
<gene>
    <name evidence="1" type="primary">plsX</name>
    <name type="ordered locus">HD_0773</name>
</gene>